<dbReference type="EMBL" id="KF891317">
    <property type="protein sequence ID" value="AIU92925.1"/>
    <property type="molecule type" value="mRNA"/>
</dbReference>
<dbReference type="RefSeq" id="XP_060572581.1">
    <property type="nucleotide sequence ID" value="XM_060716598.1"/>
</dbReference>
<dbReference type="RefSeq" id="XP_060572582.1">
    <property type="nucleotide sequence ID" value="XM_060716599.1"/>
</dbReference>
<dbReference type="GeneID" id="132730627"/>
<dbReference type="GO" id="GO:0005576">
    <property type="term" value="C:extracellular region"/>
    <property type="evidence" value="ECO:0007669"/>
    <property type="project" value="UniProtKB-SubCell"/>
</dbReference>
<dbReference type="GO" id="GO:0005179">
    <property type="term" value="F:hormone activity"/>
    <property type="evidence" value="ECO:0007669"/>
    <property type="project" value="InterPro"/>
</dbReference>
<dbReference type="GO" id="GO:0007218">
    <property type="term" value="P:neuropeptide signaling pathway"/>
    <property type="evidence" value="ECO:0007669"/>
    <property type="project" value="UniProtKB-KW"/>
</dbReference>
<dbReference type="InterPro" id="IPR010475">
    <property type="entry name" value="AKH/RPCH_hormone"/>
</dbReference>
<dbReference type="Pfam" id="PF06377">
    <property type="entry name" value="Adipokin_hormo"/>
    <property type="match status" value="1"/>
</dbReference>
<accession>A0A0A7DNP6</accession>
<name>GRHLP_RUDPH</name>
<keyword id="KW-0165">Cleavage on pair of basic residues</keyword>
<keyword id="KW-0527">Neuropeptide</keyword>
<keyword id="KW-0964">Secreted</keyword>
<keyword id="KW-0732">Signal</keyword>
<reference evidence="6" key="1">
    <citation type="journal article" date="2015" name="Comp. Biochem. Physiol.">
        <title>Molecular cloning, characterization, and expression analysis of a gonadotropin-releasing hormone-like cDNA in the clam, Ruditapes philippinarum.</title>
        <authorList>
            <person name="Song Y."/>
            <person name="Miao J."/>
            <person name="Cai Y."/>
            <person name="Pan L."/>
        </authorList>
    </citation>
    <scope>NUCLEOTIDE SEQUENCE [MRNA]</scope>
    <scope>FUNCTION</scope>
    <scope>DEVELOPMENTAL STAGE</scope>
    <scope>PHYLOGENETIC ANALYSIS</scope>
</reference>
<protein>
    <recommendedName>
        <fullName evidence="4">Prepro-gonadotropin-releasing hormone-like protein</fullName>
        <shortName evidence="4">rp-GnRH</shortName>
    </recommendedName>
    <component>
        <recommendedName>
            <fullName evidence="4">GnRH dodecapeptide</fullName>
        </recommendedName>
    </component>
    <component>
        <recommendedName>
            <fullName evidence="4">GnRH-associated peptide</fullName>
            <shortName evidence="4">GAP</shortName>
        </recommendedName>
    </component>
</protein>
<organism evidence="6">
    <name type="scientific">Ruditapes philippinarum</name>
    <name type="common">Japanese carpet shell</name>
    <name type="synonym">Venerupis philippinarum</name>
    <dbReference type="NCBI Taxonomy" id="129788"/>
    <lineage>
        <taxon>Eukaryota</taxon>
        <taxon>Metazoa</taxon>
        <taxon>Spiralia</taxon>
        <taxon>Lophotrochozoa</taxon>
        <taxon>Mollusca</taxon>
        <taxon>Bivalvia</taxon>
        <taxon>Autobranchia</taxon>
        <taxon>Heteroconchia</taxon>
        <taxon>Euheterodonta</taxon>
        <taxon>Imparidentia</taxon>
        <taxon>Neoheterodontei</taxon>
        <taxon>Venerida</taxon>
        <taxon>Veneroidea</taxon>
        <taxon>Veneridae</taxon>
        <taxon>Ruditapes</taxon>
    </lineage>
</organism>
<comment type="function">
    <text evidence="3">Neuropeptide involved in reproduction. May be an important hormone in the regulation of gonadal maturation.</text>
</comment>
<comment type="subcellular location">
    <subcellularLocation>
        <location evidence="1">Secreted</location>
    </subcellularLocation>
</comment>
<comment type="developmental stage">
    <text evidence="3">Expressed in the visceral ganglia at the gonadal early development stage in both sexes. Expressed significantly higher in the female gonad of early development stage (stage 1) than the indifference stage (stage 0). Males have higher expression in stage 1 compared with stage 0. Expression levels decrease during the late development stage (stage 2) and ripe stage (stage 3). There are positive significant correlations between the levels of this protein and progesterone as well as this protein and testosterone throughout the gonadal maturation.</text>
</comment>
<evidence type="ECO:0000250" key="1">
    <source>
        <dbReference type="UniProtKB" id="Q17128"/>
    </source>
</evidence>
<evidence type="ECO:0000255" key="2"/>
<evidence type="ECO:0000269" key="3">
    <source>
    </source>
</evidence>
<evidence type="ECO:0000303" key="4">
    <source>
    </source>
</evidence>
<evidence type="ECO:0000305" key="5"/>
<evidence type="ECO:0000312" key="6">
    <source>
        <dbReference type="EMBL" id="AIU92925.1"/>
    </source>
</evidence>
<feature type="signal peptide" evidence="2">
    <location>
        <begin position="1"/>
        <end position="21"/>
    </location>
</feature>
<feature type="chain" id="PRO_5002026334" description="Prepro-gonadotropin-releasing hormone-like protein">
    <location>
        <begin position="22"/>
        <end position="94"/>
    </location>
</feature>
<feature type="peptide" id="PRO_0000434899" description="GnRH dodecapeptide" evidence="5">
    <location>
        <begin position="22"/>
        <end position="33"/>
    </location>
</feature>
<feature type="peptide" id="PRO_0000434900" description="GnRH-associated peptide" evidence="5">
    <location>
        <begin position="36"/>
        <end position="94"/>
    </location>
</feature>
<feature type="site" description="Cleavage" evidence="5">
    <location>
        <begin position="34"/>
        <end position="35"/>
    </location>
</feature>
<sequence>MNACILLTTLVTMITIEKVQGQSYHFSNGWNPGKRSMQEPVCHFRQDVQTLVLKLIEDEVYRMLSDPSCIGGVPTLRNFLKKDLAYTVPLDDKK</sequence>
<proteinExistence type="evidence at transcript level"/>